<evidence type="ECO:0000255" key="1"/>
<evidence type="ECO:0000256" key="2">
    <source>
        <dbReference type="SAM" id="MobiDB-lite"/>
    </source>
</evidence>
<evidence type="ECO:0000269" key="3">
    <source>
    </source>
</evidence>
<evidence type="ECO:0000303" key="4">
    <source>
    </source>
</evidence>
<evidence type="ECO:0000305" key="5"/>
<evidence type="ECO:0000305" key="6">
    <source>
    </source>
</evidence>
<gene>
    <name evidence="4" type="primary">RXLR39</name>
</gene>
<reference key="1">
    <citation type="journal article" date="2018" name="Front. Plant Sci.">
        <title>In planta functional analysis and subcellular localization of the oomycete pathogen Plasmopara viticola candidate RXLR effector repertoire.</title>
        <authorList>
            <person name="Liu Y."/>
            <person name="Lan X."/>
            <person name="Song S."/>
            <person name="Yin L."/>
            <person name="Dry I.B."/>
            <person name="Qu J."/>
            <person name="Xiang J."/>
            <person name="Lu J."/>
        </authorList>
    </citation>
    <scope>NUCLEOTIDE SEQUENCE [MRNA]</scope>
    <scope>DOMAIN</scope>
    <scope>FUNCTION</scope>
    <scope>SUBCELLULAR LOCATION</scope>
</reference>
<dbReference type="SMR" id="P0CV08"/>
<dbReference type="GO" id="GO:0005576">
    <property type="term" value="C:extracellular region"/>
    <property type="evidence" value="ECO:0007669"/>
    <property type="project" value="UniProtKB-SubCell"/>
</dbReference>
<dbReference type="GO" id="GO:0042025">
    <property type="term" value="C:host cell nucleus"/>
    <property type="evidence" value="ECO:0007669"/>
    <property type="project" value="UniProtKB-SubCell"/>
</dbReference>
<organism>
    <name type="scientific">Plasmopara viticola</name>
    <name type="common">Downy mildew of grapevine</name>
    <name type="synonym">Botrytis viticola</name>
    <dbReference type="NCBI Taxonomy" id="143451"/>
    <lineage>
        <taxon>Eukaryota</taxon>
        <taxon>Sar</taxon>
        <taxon>Stramenopiles</taxon>
        <taxon>Oomycota</taxon>
        <taxon>Peronosporales</taxon>
        <taxon>Peronosporaceae</taxon>
        <taxon>Plasmopara</taxon>
    </lineage>
</organism>
<proteinExistence type="evidence at transcript level"/>
<feature type="signal peptide" evidence="1">
    <location>
        <begin position="1"/>
        <end position="19"/>
    </location>
</feature>
<feature type="chain" id="PRO_0000447917" description="Secreted RxLR effector protein 39">
    <location>
        <begin position="20"/>
        <end position="280"/>
    </location>
</feature>
<feature type="region of interest" description="Disordered" evidence="2">
    <location>
        <begin position="229"/>
        <end position="249"/>
    </location>
</feature>
<feature type="short sequence motif" description="RxLR-dEER" evidence="6">
    <location>
        <begin position="49"/>
        <end position="70"/>
    </location>
</feature>
<keyword id="KW-1048">Host nucleus</keyword>
<keyword id="KW-0964">Secreted</keyword>
<keyword id="KW-0732">Signal</keyword>
<keyword id="KW-0843">Virulence</keyword>
<accession>P0CV08</accession>
<protein>
    <recommendedName>
        <fullName evidence="4">Secreted RxLR effector protein 39</fullName>
    </recommendedName>
</protein>
<name>RLR39_PLAVT</name>
<sequence>MRGAYYVAIALLIVASCSAAEVDQTEPEKVPNNGFVTSGGTVNKMLPKRVLRGSRDLKNKWAVHAGGEDRMLNRFSNENNLLEGIDQTITKAANVMGTNRDDVIVKAAEAMTNYKQLDPTLNILNSKHQLIKPRPINVYRQALLHATPNPKKSVVAVPNDVPFVLANRLEREKSTNTVNYAGRPITQHDYLPASLSFPSTSAVAPDGQFNKQLITQKALEFDLIKRPDEVKARSSKRQRTNPMLNNMDGRELHAQPNLEEPLAPVANNMPFVWATKLGEK</sequence>
<comment type="function">
    <text evidence="3">Secreted effector that completely suppresses the host cell death induced by cell death-inducing proteins.</text>
</comment>
<comment type="subcellular location">
    <subcellularLocation>
        <location evidence="3">Secreted</location>
    </subcellularLocation>
    <subcellularLocation>
        <location evidence="3">Host nucleus</location>
    </subcellularLocation>
</comment>
<comment type="domain">
    <text evidence="6">The RxLR-dEER motif acts to carry the protein into the host cell cytoplasm through binding to cell surface phosphatidylinositol-3-phosphate.</text>
</comment>
<comment type="similarity">
    <text evidence="5">Belongs to the RxLR effector family.</text>
</comment>